<accession>Q8NGI2</accession>
<accession>B2RNP8</accession>
<accession>Q6IF77</accession>
<protein>
    <recommendedName>
        <fullName>Olfactory receptor 52N4</fullName>
    </recommendedName>
    <alternativeName>
        <fullName>Olfactory receptor OR11-64</fullName>
    </alternativeName>
</protein>
<name>O52N4_HUMAN</name>
<sequence length="321" mass="36080">MLTLNKTDLIPASFILNGVPGLEDTQLWISFPFCSMYVVAMVGNCGLLYLIHYEDALHKPMYYFLAMLSFTDLVMCSSTIPKALCIFWFHLKDIGFDECLVQMFFTHTFTGMESGVLMLMALDRYVAICYPLRYSTILTNPVIAKVGTATFLRGVLLIIPFTFLTKLLPYCRGNILPHTYCDHMSVAKLSCGNVKVNAIYGLMVALLIWGFDILCITNSYTMILRAVVSLSSADARQKAFNTCTAHICAIVFSYTPAFFSFFSHRFGEHIIPPSCHIIVANIYLLLPPTMNPIVYGVKTKQIRDCVIRILSGSKDTKSYSM</sequence>
<proteinExistence type="evidence at transcript level"/>
<dbReference type="EMBL" id="AB065813">
    <property type="protein sequence ID" value="BAC06032.1"/>
    <property type="molecule type" value="Genomic_DNA"/>
</dbReference>
<dbReference type="EMBL" id="AC131574">
    <property type="status" value="NOT_ANNOTATED_CDS"/>
    <property type="molecule type" value="Genomic_DNA"/>
</dbReference>
<dbReference type="EMBL" id="CH471064">
    <property type="protein sequence ID" value="EAW68764.1"/>
    <property type="molecule type" value="Genomic_DNA"/>
</dbReference>
<dbReference type="EMBL" id="BC137035">
    <property type="protein sequence ID" value="AAI37036.1"/>
    <property type="molecule type" value="mRNA"/>
</dbReference>
<dbReference type="EMBL" id="BC137036">
    <property type="protein sequence ID" value="AAI37037.1"/>
    <property type="molecule type" value="mRNA"/>
</dbReference>
<dbReference type="EMBL" id="BK004385">
    <property type="protein sequence ID" value="DAA04783.1"/>
    <property type="molecule type" value="Genomic_DNA"/>
</dbReference>
<dbReference type="CCDS" id="CCDS44528.1"/>
<dbReference type="RefSeq" id="NP_001005175.3">
    <property type="nucleotide sequence ID" value="NM_001005175.5"/>
</dbReference>
<dbReference type="RefSeq" id="XP_016873200.1">
    <property type="nucleotide sequence ID" value="XM_017017711.3"/>
</dbReference>
<dbReference type="RefSeq" id="XP_016873201.1">
    <property type="nucleotide sequence ID" value="XM_017017712.1"/>
</dbReference>
<dbReference type="RefSeq" id="XP_016873202.1">
    <property type="nucleotide sequence ID" value="XM_017017713.3"/>
</dbReference>
<dbReference type="SMR" id="Q8NGI2"/>
<dbReference type="BioGRID" id="133384">
    <property type="interactions" value="3"/>
</dbReference>
<dbReference type="FunCoup" id="Q8NGI2">
    <property type="interactions" value="463"/>
</dbReference>
<dbReference type="IntAct" id="Q8NGI2">
    <property type="interactions" value="3"/>
</dbReference>
<dbReference type="STRING" id="9606.ENSP00000493338"/>
<dbReference type="GlyCosmos" id="Q8NGI2">
    <property type="glycosylation" value="1 site, No reported glycans"/>
</dbReference>
<dbReference type="GlyGen" id="Q8NGI2">
    <property type="glycosylation" value="1 site"/>
</dbReference>
<dbReference type="iPTMnet" id="Q8NGI2"/>
<dbReference type="PhosphoSitePlus" id="Q8NGI2"/>
<dbReference type="BioMuta" id="OR52N4"/>
<dbReference type="DMDM" id="296439252"/>
<dbReference type="PaxDb" id="9606-ENSP00000323224"/>
<dbReference type="Antibodypedia" id="63620">
    <property type="antibodies" value="46 antibodies from 16 providers"/>
</dbReference>
<dbReference type="DNASU" id="390072"/>
<dbReference type="Ensembl" id="ENST00000641350.2">
    <property type="protein sequence ID" value="ENSP00000493338.1"/>
    <property type="gene ID" value="ENSG00000181074.5"/>
</dbReference>
<dbReference type="GeneID" id="390072"/>
<dbReference type="KEGG" id="hsa:390072"/>
<dbReference type="MANE-Select" id="ENST00000641350.2">
    <property type="protein sequence ID" value="ENSP00000493338.1"/>
    <property type="RefSeq nucleotide sequence ID" value="NM_001005175.5"/>
    <property type="RefSeq protein sequence ID" value="NP_001005175.3"/>
</dbReference>
<dbReference type="UCSC" id="uc001mbu.3">
    <property type="organism name" value="human"/>
</dbReference>
<dbReference type="AGR" id="HGNC:15230"/>
<dbReference type="CTD" id="390072"/>
<dbReference type="GeneCards" id="OR52N4"/>
<dbReference type="HGNC" id="HGNC:15230">
    <property type="gene designation" value="OR52N4"/>
</dbReference>
<dbReference type="HPA" id="ENSG00000181074">
    <property type="expression patterns" value="Tissue enhanced (lymphoid)"/>
</dbReference>
<dbReference type="neXtProt" id="NX_Q8NGI2"/>
<dbReference type="OpenTargets" id="ENSG00000181074"/>
<dbReference type="PharmGKB" id="PA32428"/>
<dbReference type="VEuPathDB" id="HostDB:ENSG00000181074"/>
<dbReference type="eggNOG" id="ENOG502QV28">
    <property type="taxonomic scope" value="Eukaryota"/>
</dbReference>
<dbReference type="GeneTree" id="ENSGT01130000278278"/>
<dbReference type="HOGENOM" id="CLU_012526_0_0_1"/>
<dbReference type="InParanoid" id="Q8NGI2"/>
<dbReference type="OMA" id="VAMAGNC"/>
<dbReference type="OrthoDB" id="5969463at2759"/>
<dbReference type="PAN-GO" id="Q8NGI2">
    <property type="GO annotations" value="0 GO annotations based on evolutionary models"/>
</dbReference>
<dbReference type="PhylomeDB" id="Q8NGI2"/>
<dbReference type="TreeFam" id="TF343679"/>
<dbReference type="PathwayCommons" id="Q8NGI2"/>
<dbReference type="Reactome" id="R-HSA-9752946">
    <property type="pathway name" value="Expression and translocation of olfactory receptors"/>
</dbReference>
<dbReference type="BioGRID-ORCS" id="390072">
    <property type="hits" value="10 hits in 714 CRISPR screens"/>
</dbReference>
<dbReference type="ChiTaRS" id="OR52N4">
    <property type="organism name" value="human"/>
</dbReference>
<dbReference type="GeneWiki" id="OR52N4"/>
<dbReference type="GenomeRNAi" id="390072"/>
<dbReference type="Pharos" id="Q8NGI2">
    <property type="development level" value="Tdark"/>
</dbReference>
<dbReference type="PRO" id="PR:Q8NGI2"/>
<dbReference type="Proteomes" id="UP000005640">
    <property type="component" value="Chromosome 11"/>
</dbReference>
<dbReference type="RNAct" id="Q8NGI2">
    <property type="molecule type" value="protein"/>
</dbReference>
<dbReference type="Bgee" id="ENSG00000181074">
    <property type="expression patterns" value="Expressed in male germ line stem cell (sensu Vertebrata) in testis and 81 other cell types or tissues"/>
</dbReference>
<dbReference type="GO" id="GO:0005886">
    <property type="term" value="C:plasma membrane"/>
    <property type="evidence" value="ECO:0000318"/>
    <property type="project" value="GO_Central"/>
</dbReference>
<dbReference type="GO" id="GO:0004930">
    <property type="term" value="F:G protein-coupled receptor activity"/>
    <property type="evidence" value="ECO:0007669"/>
    <property type="project" value="UniProtKB-KW"/>
</dbReference>
<dbReference type="GO" id="GO:0004984">
    <property type="term" value="F:olfactory receptor activity"/>
    <property type="evidence" value="ECO:0000318"/>
    <property type="project" value="GO_Central"/>
</dbReference>
<dbReference type="FunFam" id="1.20.1070.10:FF:000006">
    <property type="entry name" value="Olfactory receptor"/>
    <property type="match status" value="1"/>
</dbReference>
<dbReference type="Gene3D" id="1.20.1070.10">
    <property type="entry name" value="Rhodopsin 7-helix transmembrane proteins"/>
    <property type="match status" value="1"/>
</dbReference>
<dbReference type="InterPro" id="IPR000276">
    <property type="entry name" value="GPCR_Rhodpsn"/>
</dbReference>
<dbReference type="InterPro" id="IPR017452">
    <property type="entry name" value="GPCR_Rhodpsn_7TM"/>
</dbReference>
<dbReference type="InterPro" id="IPR000725">
    <property type="entry name" value="Olfact_rcpt"/>
</dbReference>
<dbReference type="InterPro" id="IPR050402">
    <property type="entry name" value="OR51/52/56-like"/>
</dbReference>
<dbReference type="PANTHER" id="PTHR26450:SF194">
    <property type="entry name" value="OLFACTORY RECEPTOR 52N4"/>
    <property type="match status" value="1"/>
</dbReference>
<dbReference type="PANTHER" id="PTHR26450">
    <property type="entry name" value="OLFACTORY RECEPTOR 56B1-RELATED"/>
    <property type="match status" value="1"/>
</dbReference>
<dbReference type="Pfam" id="PF13853">
    <property type="entry name" value="7tm_4"/>
    <property type="match status" value="1"/>
</dbReference>
<dbReference type="PRINTS" id="PR00237">
    <property type="entry name" value="GPCRRHODOPSN"/>
</dbReference>
<dbReference type="PRINTS" id="PR00245">
    <property type="entry name" value="OLFACTORYR"/>
</dbReference>
<dbReference type="SUPFAM" id="SSF81321">
    <property type="entry name" value="Family A G protein-coupled receptor-like"/>
    <property type="match status" value="1"/>
</dbReference>
<dbReference type="PROSITE" id="PS00237">
    <property type="entry name" value="G_PROTEIN_RECEP_F1_1"/>
    <property type="match status" value="1"/>
</dbReference>
<dbReference type="PROSITE" id="PS50262">
    <property type="entry name" value="G_PROTEIN_RECEP_F1_2"/>
    <property type="match status" value="1"/>
</dbReference>
<feature type="chain" id="PRO_0000150788" description="Olfactory receptor 52N4">
    <location>
        <begin position="1"/>
        <end position="321"/>
    </location>
</feature>
<feature type="topological domain" description="Extracellular" evidence="1">
    <location>
        <begin position="1"/>
        <end position="27"/>
    </location>
</feature>
<feature type="transmembrane region" description="Helical; Name=1" evidence="1">
    <location>
        <begin position="28"/>
        <end position="48"/>
    </location>
</feature>
<feature type="topological domain" description="Cytoplasmic" evidence="1">
    <location>
        <begin position="49"/>
        <end position="56"/>
    </location>
</feature>
<feature type="transmembrane region" description="Helical; Name=2" evidence="1">
    <location>
        <begin position="57"/>
        <end position="77"/>
    </location>
</feature>
<feature type="topological domain" description="Extracellular" evidence="1">
    <location>
        <begin position="78"/>
        <end position="101"/>
    </location>
</feature>
<feature type="transmembrane region" description="Helical; Name=3" evidence="1">
    <location>
        <begin position="102"/>
        <end position="122"/>
    </location>
</feature>
<feature type="topological domain" description="Cytoplasmic" evidence="1">
    <location>
        <begin position="123"/>
        <end position="141"/>
    </location>
</feature>
<feature type="transmembrane region" description="Helical; Name=4" evidence="1">
    <location>
        <begin position="142"/>
        <end position="162"/>
    </location>
</feature>
<feature type="topological domain" description="Extracellular" evidence="1">
    <location>
        <begin position="163"/>
        <end position="198"/>
    </location>
</feature>
<feature type="transmembrane region" description="Helical; Name=5" evidence="1">
    <location>
        <begin position="199"/>
        <end position="219"/>
    </location>
</feature>
<feature type="topological domain" description="Cytoplasmic" evidence="1">
    <location>
        <begin position="220"/>
        <end position="239"/>
    </location>
</feature>
<feature type="transmembrane region" description="Helical; Name=6" evidence="1">
    <location>
        <begin position="240"/>
        <end position="260"/>
    </location>
</feature>
<feature type="topological domain" description="Extracellular" evidence="1">
    <location>
        <begin position="261"/>
        <end position="276"/>
    </location>
</feature>
<feature type="transmembrane region" description="Helical; Name=7" evidence="1">
    <location>
        <begin position="277"/>
        <end position="297"/>
    </location>
</feature>
<feature type="topological domain" description="Cytoplasmic" evidence="1">
    <location>
        <begin position="298"/>
        <end position="321"/>
    </location>
</feature>
<feature type="glycosylation site" description="N-linked (GlcNAc...) asparagine" evidence="1">
    <location>
        <position position="5"/>
    </location>
</feature>
<feature type="disulfide bond" evidence="2">
    <location>
        <begin position="99"/>
        <end position="191"/>
    </location>
</feature>
<feature type="sequence variant" id="VAR_034352" description="In dbSNP:rs7936512." evidence="3 4 5 6">
    <original>T</original>
    <variation>I</variation>
    <location>
        <position position="106"/>
    </location>
</feature>
<feature type="sequence variant" id="VAR_053338" description="In dbSNP:rs7394584." evidence="3 4 5 6">
    <original>L</original>
    <variation>R</variation>
    <location>
        <position position="167"/>
    </location>
</feature>
<feature type="sequence variant" id="VAR_053339" description="In dbSNP:rs12363178." evidence="3 5">
    <original>W</original>
    <variation>G</variation>
    <location>
        <position position="209"/>
    </location>
</feature>
<feature type="sequence variant" id="VAR_034353" description="In dbSNP:rs7396938." evidence="3 4 5 6">
    <original>N</original>
    <variation>I</variation>
    <location>
        <position position="218"/>
    </location>
</feature>
<evidence type="ECO:0000255" key="1"/>
<evidence type="ECO:0000255" key="2">
    <source>
        <dbReference type="PROSITE-ProRule" id="PRU00521"/>
    </source>
</evidence>
<evidence type="ECO:0000269" key="3">
    <source>
    </source>
</evidence>
<evidence type="ECO:0000269" key="4">
    <source>
    </source>
</evidence>
<evidence type="ECO:0000269" key="5">
    <source ref="1"/>
</evidence>
<evidence type="ECO:0000269" key="6">
    <source ref="3"/>
</evidence>
<evidence type="ECO:0000305" key="7"/>
<keyword id="KW-1003">Cell membrane</keyword>
<keyword id="KW-1015">Disulfide bond</keyword>
<keyword id="KW-0297">G-protein coupled receptor</keyword>
<keyword id="KW-0325">Glycoprotein</keyword>
<keyword id="KW-0472">Membrane</keyword>
<keyword id="KW-0552">Olfaction</keyword>
<keyword id="KW-0675">Receptor</keyword>
<keyword id="KW-1185">Reference proteome</keyword>
<keyword id="KW-0716">Sensory transduction</keyword>
<keyword id="KW-0807">Transducer</keyword>
<keyword id="KW-0812">Transmembrane</keyword>
<keyword id="KW-1133">Transmembrane helix</keyword>
<reference key="1">
    <citation type="submission" date="2001-07" db="EMBL/GenBank/DDBJ databases">
        <title>Genome-wide discovery and analysis of human seven transmembrane helix receptor genes.</title>
        <authorList>
            <person name="Suwa M."/>
            <person name="Sato T."/>
            <person name="Okouchi I."/>
            <person name="Arita M."/>
            <person name="Futami K."/>
            <person name="Matsumoto S."/>
            <person name="Tsutsumi S."/>
            <person name="Aburatani H."/>
            <person name="Asai K."/>
            <person name="Akiyama Y."/>
        </authorList>
    </citation>
    <scope>NUCLEOTIDE SEQUENCE [GENOMIC DNA]</scope>
    <scope>VARIANTS ILE-106; ARG-167; GLY-209 AND ILE-218</scope>
</reference>
<reference key="2">
    <citation type="journal article" date="2006" name="Nature">
        <title>Human chromosome 11 DNA sequence and analysis including novel gene identification.</title>
        <authorList>
            <person name="Taylor T.D."/>
            <person name="Noguchi H."/>
            <person name="Totoki Y."/>
            <person name="Toyoda A."/>
            <person name="Kuroki Y."/>
            <person name="Dewar K."/>
            <person name="Lloyd C."/>
            <person name="Itoh T."/>
            <person name="Takeda T."/>
            <person name="Kim D.-W."/>
            <person name="She X."/>
            <person name="Barlow K.F."/>
            <person name="Bloom T."/>
            <person name="Bruford E."/>
            <person name="Chang J.L."/>
            <person name="Cuomo C.A."/>
            <person name="Eichler E."/>
            <person name="FitzGerald M.G."/>
            <person name="Jaffe D.B."/>
            <person name="LaButti K."/>
            <person name="Nicol R."/>
            <person name="Park H.-S."/>
            <person name="Seaman C."/>
            <person name="Sougnez C."/>
            <person name="Yang X."/>
            <person name="Zimmer A.R."/>
            <person name="Zody M.C."/>
            <person name="Birren B.W."/>
            <person name="Nusbaum C."/>
            <person name="Fujiyama A."/>
            <person name="Hattori M."/>
            <person name="Rogers J."/>
            <person name="Lander E.S."/>
            <person name="Sakaki Y."/>
        </authorList>
    </citation>
    <scope>NUCLEOTIDE SEQUENCE [LARGE SCALE GENOMIC DNA]</scope>
</reference>
<reference key="3">
    <citation type="submission" date="2005-09" db="EMBL/GenBank/DDBJ databases">
        <authorList>
            <person name="Mural R.J."/>
            <person name="Istrail S."/>
            <person name="Sutton G.G."/>
            <person name="Florea L."/>
            <person name="Halpern A.L."/>
            <person name="Mobarry C.M."/>
            <person name="Lippert R."/>
            <person name="Walenz B."/>
            <person name="Shatkay H."/>
            <person name="Dew I."/>
            <person name="Miller J.R."/>
            <person name="Flanigan M.J."/>
            <person name="Edwards N.J."/>
            <person name="Bolanos R."/>
            <person name="Fasulo D."/>
            <person name="Halldorsson B.V."/>
            <person name="Hannenhalli S."/>
            <person name="Turner R."/>
            <person name="Yooseph S."/>
            <person name="Lu F."/>
            <person name="Nusskern D.R."/>
            <person name="Shue B.C."/>
            <person name="Zheng X.H."/>
            <person name="Zhong F."/>
            <person name="Delcher A.L."/>
            <person name="Huson D.H."/>
            <person name="Kravitz S.A."/>
            <person name="Mouchard L."/>
            <person name="Reinert K."/>
            <person name="Remington K.A."/>
            <person name="Clark A.G."/>
            <person name="Waterman M.S."/>
            <person name="Eichler E.E."/>
            <person name="Adams M.D."/>
            <person name="Hunkapiller M.W."/>
            <person name="Myers E.W."/>
            <person name="Venter J.C."/>
        </authorList>
    </citation>
    <scope>NUCLEOTIDE SEQUENCE [LARGE SCALE GENOMIC DNA]</scope>
    <scope>VARIANTS ILE-106; ARG-167 AND ILE-218</scope>
</reference>
<reference key="4">
    <citation type="journal article" date="2004" name="Genome Res.">
        <title>The status, quality, and expansion of the NIH full-length cDNA project: the Mammalian Gene Collection (MGC).</title>
        <authorList>
            <consortium name="The MGC Project Team"/>
        </authorList>
    </citation>
    <scope>NUCLEOTIDE SEQUENCE [LARGE SCALE MRNA]</scope>
    <scope>VARIANTS ILE-106; ARG-167 AND ILE-218</scope>
</reference>
<reference key="5">
    <citation type="journal article" date="2004" name="Proc. Natl. Acad. Sci. U.S.A.">
        <title>The human olfactory receptor gene family.</title>
        <authorList>
            <person name="Malnic B."/>
            <person name="Godfrey P.A."/>
            <person name="Buck L.B."/>
        </authorList>
    </citation>
    <scope>IDENTIFICATION</scope>
    <scope>VARIANTS ILE-106; ARG-167; GLY-209 AND ILE-218</scope>
</reference>
<reference key="6">
    <citation type="journal article" date="2004" name="Proc. Natl. Acad. Sci. U.S.A.">
        <authorList>
            <person name="Malnic B."/>
            <person name="Godfrey P.A."/>
            <person name="Buck L.B."/>
        </authorList>
    </citation>
    <scope>ERRATUM OF PUBMED:14983052</scope>
</reference>
<reference key="7">
    <citation type="journal article" date="2003" name="Nat. Genet.">
        <title>Different noses for different people.</title>
        <authorList>
            <person name="Menashe I."/>
            <person name="Man O."/>
            <person name="Lancet D."/>
            <person name="Gilad Y."/>
        </authorList>
    </citation>
    <scope>POLYMORPHISM</scope>
</reference>
<organism>
    <name type="scientific">Homo sapiens</name>
    <name type="common">Human</name>
    <dbReference type="NCBI Taxonomy" id="9606"/>
    <lineage>
        <taxon>Eukaryota</taxon>
        <taxon>Metazoa</taxon>
        <taxon>Chordata</taxon>
        <taxon>Craniata</taxon>
        <taxon>Vertebrata</taxon>
        <taxon>Euteleostomi</taxon>
        <taxon>Mammalia</taxon>
        <taxon>Eutheria</taxon>
        <taxon>Euarchontoglires</taxon>
        <taxon>Primates</taxon>
        <taxon>Haplorrhini</taxon>
        <taxon>Catarrhini</taxon>
        <taxon>Hominidae</taxon>
        <taxon>Homo</taxon>
    </lineage>
</organism>
<gene>
    <name type="primary">OR52N4</name>
</gene>
<comment type="function">
    <text evidence="7">Odorant receptor.</text>
</comment>
<comment type="subcellular location">
    <subcellularLocation>
        <location>Cell membrane</location>
        <topology>Multi-pass membrane protein</topology>
    </subcellularLocation>
</comment>
<comment type="polymorphism">
    <text>A stop codon at position Arg-172 in the gene coding for this protein is responsible for functional diversity thus producing a pseudogene. The stop codon is more frequent in non-Africans than in African-Americans.</text>
</comment>
<comment type="similarity">
    <text evidence="2">Belongs to the G-protein coupled receptor 1 family.</text>
</comment>
<comment type="online information" name="Human Olfactory Receptor Data Exploratorium (HORDE)">
    <link uri="http://genome.weizmann.ac.il/horde/card/index/symbol:OR52N4"/>
</comment>